<feature type="chain" id="PRO_0000250148" description="3-isopropylmalate dehydrogenase">
    <location>
        <begin position="1"/>
        <end position="355"/>
    </location>
</feature>
<feature type="binding site" evidence="1">
    <location>
        <begin position="77"/>
        <end position="90"/>
    </location>
    <ligand>
        <name>NAD(+)</name>
        <dbReference type="ChEBI" id="CHEBI:57540"/>
    </ligand>
</feature>
<feature type="binding site" evidence="1">
    <location>
        <position position="97"/>
    </location>
    <ligand>
        <name>substrate</name>
    </ligand>
</feature>
<feature type="binding site" evidence="1">
    <location>
        <position position="107"/>
    </location>
    <ligand>
        <name>substrate</name>
    </ligand>
</feature>
<feature type="binding site" evidence="1">
    <location>
        <position position="135"/>
    </location>
    <ligand>
        <name>substrate</name>
    </ligand>
</feature>
<feature type="binding site" evidence="1">
    <location>
        <position position="220"/>
    </location>
    <ligand>
        <name>Mg(2+)</name>
        <dbReference type="ChEBI" id="CHEBI:18420"/>
    </ligand>
</feature>
<feature type="binding site" evidence="1">
    <location>
        <position position="220"/>
    </location>
    <ligand>
        <name>substrate</name>
    </ligand>
</feature>
<feature type="binding site" evidence="1">
    <location>
        <position position="244"/>
    </location>
    <ligand>
        <name>Mg(2+)</name>
        <dbReference type="ChEBI" id="CHEBI:18420"/>
    </ligand>
</feature>
<feature type="binding site" evidence="1">
    <location>
        <position position="248"/>
    </location>
    <ligand>
        <name>Mg(2+)</name>
        <dbReference type="ChEBI" id="CHEBI:18420"/>
    </ligand>
</feature>
<feature type="binding site" evidence="1">
    <location>
        <begin position="277"/>
        <end position="289"/>
    </location>
    <ligand>
        <name>NAD(+)</name>
        <dbReference type="ChEBI" id="CHEBI:57540"/>
    </ligand>
</feature>
<feature type="site" description="Important for catalysis" evidence="1">
    <location>
        <position position="142"/>
    </location>
</feature>
<feature type="site" description="Important for catalysis" evidence="1">
    <location>
        <position position="188"/>
    </location>
</feature>
<proteinExistence type="inferred from homology"/>
<comment type="function">
    <text evidence="1">Catalyzes the oxidation of 3-carboxy-2-hydroxy-4-methylpentanoate (3-isopropylmalate) to 3-carboxy-4-methyl-2-oxopentanoate. The product decarboxylates to 4-methyl-2 oxopentanoate.</text>
</comment>
<comment type="catalytic activity">
    <reaction evidence="1">
        <text>(2R,3S)-3-isopropylmalate + NAD(+) = 4-methyl-2-oxopentanoate + CO2 + NADH</text>
        <dbReference type="Rhea" id="RHEA:32271"/>
        <dbReference type="ChEBI" id="CHEBI:16526"/>
        <dbReference type="ChEBI" id="CHEBI:17865"/>
        <dbReference type="ChEBI" id="CHEBI:35121"/>
        <dbReference type="ChEBI" id="CHEBI:57540"/>
        <dbReference type="ChEBI" id="CHEBI:57945"/>
        <dbReference type="EC" id="1.1.1.85"/>
    </reaction>
</comment>
<comment type="cofactor">
    <cofactor evidence="1">
        <name>Mg(2+)</name>
        <dbReference type="ChEBI" id="CHEBI:18420"/>
    </cofactor>
    <cofactor evidence="1">
        <name>Mn(2+)</name>
        <dbReference type="ChEBI" id="CHEBI:29035"/>
    </cofactor>
    <text evidence="1">Binds 1 Mg(2+) or Mn(2+) ion per subunit.</text>
</comment>
<comment type="pathway">
    <text evidence="1">Amino-acid biosynthesis; L-leucine biosynthesis; L-leucine from 3-methyl-2-oxobutanoate: step 3/4.</text>
</comment>
<comment type="subunit">
    <text evidence="1">Homodimer.</text>
</comment>
<comment type="subcellular location">
    <subcellularLocation>
        <location evidence="1">Cytoplasm</location>
    </subcellularLocation>
</comment>
<comment type="similarity">
    <text evidence="1">Belongs to the isocitrate and isopropylmalate dehydrogenases family. LeuB type 1 subfamily.</text>
</comment>
<sequence length="355" mass="38671">MKTYKIALIKGDGIGPEIIDEAVKVLDAVASCCDLEFSYEEALMGGCAYDITGDPLPQETINISLNSDAVLFGAIGGAKWDNLPREKRPESGLLRFRKELGVYANLRPANVFDELINASSLKAEVIKGVDLMVVRELIGGIYFGEPKGRDENRGWNTMVYTREEIVRIAHQAFKIAMSRSKRVCSIDKANVLDVSQLWREVVIEVAKEYPEVELTHMYVDNAAMQLIRDPRQFDVMLTGNIFGDILSDEASMLSGSIGLLPSASVGAKIGVYEPIHGSAPDIAGQGIANPIATILSASMMLRYALGEHGAADKIDAAVKRALKEGYRTKDLAQYDAKEVCSTSEMGSIIANYAAK</sequence>
<organism>
    <name type="scientific">Sulfurimonas denitrificans (strain ATCC 33889 / DSM 1251)</name>
    <name type="common">Thiomicrospira denitrificans (strain ATCC 33889 / DSM 1251)</name>
    <dbReference type="NCBI Taxonomy" id="326298"/>
    <lineage>
        <taxon>Bacteria</taxon>
        <taxon>Pseudomonadati</taxon>
        <taxon>Campylobacterota</taxon>
        <taxon>Epsilonproteobacteria</taxon>
        <taxon>Campylobacterales</taxon>
        <taxon>Sulfurimonadaceae</taxon>
        <taxon>Sulfurimonas</taxon>
    </lineage>
</organism>
<keyword id="KW-0028">Amino-acid biosynthesis</keyword>
<keyword id="KW-0100">Branched-chain amino acid biosynthesis</keyword>
<keyword id="KW-0963">Cytoplasm</keyword>
<keyword id="KW-0432">Leucine biosynthesis</keyword>
<keyword id="KW-0460">Magnesium</keyword>
<keyword id="KW-0464">Manganese</keyword>
<keyword id="KW-0479">Metal-binding</keyword>
<keyword id="KW-0520">NAD</keyword>
<keyword id="KW-0560">Oxidoreductase</keyword>
<keyword id="KW-1185">Reference proteome</keyword>
<evidence type="ECO:0000255" key="1">
    <source>
        <dbReference type="HAMAP-Rule" id="MF_01033"/>
    </source>
</evidence>
<reference key="1">
    <citation type="journal article" date="2008" name="Appl. Environ. Microbiol.">
        <title>Genome of the epsilonproteobacterial chemolithoautotroph Sulfurimonas denitrificans.</title>
        <authorList>
            <person name="Sievert S.M."/>
            <person name="Scott K.M."/>
            <person name="Klotz M.G."/>
            <person name="Chain P.S.G."/>
            <person name="Hauser L.J."/>
            <person name="Hemp J."/>
            <person name="Huegler M."/>
            <person name="Land M."/>
            <person name="Lapidus A."/>
            <person name="Larimer F.W."/>
            <person name="Lucas S."/>
            <person name="Malfatti S.A."/>
            <person name="Meyer F."/>
            <person name="Paulsen I.T."/>
            <person name="Ren Q."/>
            <person name="Simon J."/>
            <person name="Bailey K."/>
            <person name="Diaz E."/>
            <person name="Fitzpatrick K.A."/>
            <person name="Glover B."/>
            <person name="Gwatney N."/>
            <person name="Korajkic A."/>
            <person name="Long A."/>
            <person name="Mobberley J.M."/>
            <person name="Pantry S.N."/>
            <person name="Pazder G."/>
            <person name="Peterson S."/>
            <person name="Quintanilla J.D."/>
            <person name="Sprinkle R."/>
            <person name="Stephens J."/>
            <person name="Thomas P."/>
            <person name="Vaughn R."/>
            <person name="Weber M.J."/>
            <person name="Wooten L.L."/>
        </authorList>
    </citation>
    <scope>NUCLEOTIDE SEQUENCE [LARGE SCALE GENOMIC DNA]</scope>
    <source>
        <strain>ATCC 33889 / DSM 1251</strain>
    </source>
</reference>
<accession>Q30RK2</accession>
<gene>
    <name evidence="1" type="primary">leuB</name>
    <name type="ordered locus">Suden_1101</name>
</gene>
<dbReference type="EC" id="1.1.1.85" evidence="1"/>
<dbReference type="EMBL" id="CP000153">
    <property type="protein sequence ID" value="ABB44379.1"/>
    <property type="molecule type" value="Genomic_DNA"/>
</dbReference>
<dbReference type="RefSeq" id="WP_011372731.1">
    <property type="nucleotide sequence ID" value="NC_007575.1"/>
</dbReference>
<dbReference type="SMR" id="Q30RK2"/>
<dbReference type="STRING" id="326298.Suden_1101"/>
<dbReference type="KEGG" id="tdn:Suden_1101"/>
<dbReference type="eggNOG" id="COG0473">
    <property type="taxonomic scope" value="Bacteria"/>
</dbReference>
<dbReference type="HOGENOM" id="CLU_031953_0_3_7"/>
<dbReference type="OrthoDB" id="9806254at2"/>
<dbReference type="UniPathway" id="UPA00048">
    <property type="reaction ID" value="UER00072"/>
</dbReference>
<dbReference type="Proteomes" id="UP000002714">
    <property type="component" value="Chromosome"/>
</dbReference>
<dbReference type="GO" id="GO:0005829">
    <property type="term" value="C:cytosol"/>
    <property type="evidence" value="ECO:0007669"/>
    <property type="project" value="TreeGrafter"/>
</dbReference>
<dbReference type="GO" id="GO:0003862">
    <property type="term" value="F:3-isopropylmalate dehydrogenase activity"/>
    <property type="evidence" value="ECO:0007669"/>
    <property type="project" value="UniProtKB-UniRule"/>
</dbReference>
<dbReference type="GO" id="GO:0000287">
    <property type="term" value="F:magnesium ion binding"/>
    <property type="evidence" value="ECO:0007669"/>
    <property type="project" value="InterPro"/>
</dbReference>
<dbReference type="GO" id="GO:0051287">
    <property type="term" value="F:NAD binding"/>
    <property type="evidence" value="ECO:0007669"/>
    <property type="project" value="InterPro"/>
</dbReference>
<dbReference type="GO" id="GO:0009098">
    <property type="term" value="P:L-leucine biosynthetic process"/>
    <property type="evidence" value="ECO:0007669"/>
    <property type="project" value="UniProtKB-UniRule"/>
</dbReference>
<dbReference type="FunFam" id="3.40.718.10:FF:000028">
    <property type="entry name" value="3-isopropylmalate dehydrogenase"/>
    <property type="match status" value="1"/>
</dbReference>
<dbReference type="Gene3D" id="3.40.718.10">
    <property type="entry name" value="Isopropylmalate Dehydrogenase"/>
    <property type="match status" value="1"/>
</dbReference>
<dbReference type="HAMAP" id="MF_01033">
    <property type="entry name" value="LeuB_type1"/>
    <property type="match status" value="1"/>
</dbReference>
<dbReference type="InterPro" id="IPR019818">
    <property type="entry name" value="IsoCit/isopropylmalate_DH_CS"/>
</dbReference>
<dbReference type="InterPro" id="IPR024084">
    <property type="entry name" value="IsoPropMal-DH-like_dom"/>
</dbReference>
<dbReference type="InterPro" id="IPR004429">
    <property type="entry name" value="Isopropylmalate_DH"/>
</dbReference>
<dbReference type="NCBIfam" id="TIGR00169">
    <property type="entry name" value="leuB"/>
    <property type="match status" value="1"/>
</dbReference>
<dbReference type="PANTHER" id="PTHR42979">
    <property type="entry name" value="3-ISOPROPYLMALATE DEHYDROGENASE"/>
    <property type="match status" value="1"/>
</dbReference>
<dbReference type="PANTHER" id="PTHR42979:SF1">
    <property type="entry name" value="3-ISOPROPYLMALATE DEHYDROGENASE"/>
    <property type="match status" value="1"/>
</dbReference>
<dbReference type="Pfam" id="PF00180">
    <property type="entry name" value="Iso_dh"/>
    <property type="match status" value="1"/>
</dbReference>
<dbReference type="SMART" id="SM01329">
    <property type="entry name" value="Iso_dh"/>
    <property type="match status" value="1"/>
</dbReference>
<dbReference type="SUPFAM" id="SSF53659">
    <property type="entry name" value="Isocitrate/Isopropylmalate dehydrogenase-like"/>
    <property type="match status" value="1"/>
</dbReference>
<dbReference type="PROSITE" id="PS00470">
    <property type="entry name" value="IDH_IMDH"/>
    <property type="match status" value="1"/>
</dbReference>
<protein>
    <recommendedName>
        <fullName evidence="1">3-isopropylmalate dehydrogenase</fullName>
        <ecNumber evidence="1">1.1.1.85</ecNumber>
    </recommendedName>
    <alternativeName>
        <fullName evidence="1">3-IPM-DH</fullName>
    </alternativeName>
    <alternativeName>
        <fullName evidence="1">Beta-IPM dehydrogenase</fullName>
        <shortName evidence="1">IMDH</shortName>
    </alternativeName>
</protein>
<name>LEU3_SULDN</name>